<dbReference type="EMBL" id="Z49445">
    <property type="protein sequence ID" value="CAA89465.1"/>
    <property type="status" value="ALT_FRAME"/>
    <property type="molecule type" value="Genomic_DNA"/>
</dbReference>
<dbReference type="EMBL" id="BK006943">
    <property type="protein sequence ID" value="DAA08634.1"/>
    <property type="molecule type" value="Genomic_DNA"/>
</dbReference>
<dbReference type="PIR" id="S56953">
    <property type="entry name" value="S56953"/>
</dbReference>
<dbReference type="RefSeq" id="NP_012365.2">
    <property type="nucleotide sequence ID" value="NM_001181603.1"/>
</dbReference>
<dbReference type="BioGRID" id="33590">
    <property type="interactions" value="32"/>
</dbReference>
<dbReference type="DIP" id="DIP-5416N"/>
<dbReference type="FunCoup" id="P46993">
    <property type="interactions" value="61"/>
</dbReference>
<dbReference type="IntAct" id="P46993">
    <property type="interactions" value="1"/>
</dbReference>
<dbReference type="STRING" id="4932.YJL170C"/>
<dbReference type="iPTMnet" id="P46993"/>
<dbReference type="PaxDb" id="4932-YJL170C"/>
<dbReference type="PeptideAtlas" id="P46993"/>
<dbReference type="EnsemblFungi" id="YJL170C_mRNA">
    <property type="protein sequence ID" value="YJL170C"/>
    <property type="gene ID" value="YJL170C"/>
</dbReference>
<dbReference type="GeneID" id="853269"/>
<dbReference type="KEGG" id="sce:YJL170C"/>
<dbReference type="AGR" id="SGD:S000003706"/>
<dbReference type="SGD" id="S000003706">
    <property type="gene designation" value="ASG7"/>
</dbReference>
<dbReference type="VEuPathDB" id="FungiDB:YJL170C"/>
<dbReference type="eggNOG" id="ENOG502S6IX">
    <property type="taxonomic scope" value="Eukaryota"/>
</dbReference>
<dbReference type="HOGENOM" id="CLU_114202_0_0_1"/>
<dbReference type="InParanoid" id="P46993"/>
<dbReference type="OMA" id="YWQPHEL"/>
<dbReference type="OrthoDB" id="4054902at2759"/>
<dbReference type="BioCyc" id="YEAST:G3O-31607-MONOMER"/>
<dbReference type="BioGRID-ORCS" id="853269">
    <property type="hits" value="1 hit in 10 CRISPR screens"/>
</dbReference>
<dbReference type="PRO" id="PR:P46993"/>
<dbReference type="Proteomes" id="UP000002311">
    <property type="component" value="Chromosome X"/>
</dbReference>
<dbReference type="RNAct" id="P46993">
    <property type="molecule type" value="protein"/>
</dbReference>
<dbReference type="GO" id="GO:0012505">
    <property type="term" value="C:endomembrane system"/>
    <property type="evidence" value="ECO:0007669"/>
    <property type="project" value="UniProtKB-SubCell"/>
</dbReference>
<dbReference type="GO" id="GO:0005886">
    <property type="term" value="C:plasma membrane"/>
    <property type="evidence" value="ECO:0000314"/>
    <property type="project" value="SGD"/>
</dbReference>
<dbReference type="GO" id="GO:0000747">
    <property type="term" value="P:conjugation with cellular fusion"/>
    <property type="evidence" value="ECO:0000270"/>
    <property type="project" value="SGD"/>
</dbReference>
<protein>
    <recommendedName>
        <fullName>Protein ASG7</fullName>
    </recommendedName>
    <alternativeName>
        <fullName>A-specific gene 7 protein</fullName>
    </alternativeName>
</protein>
<name>ASG7_YEAST</name>
<feature type="chain" id="PRO_0000203025" description="Protein ASG7">
    <location>
        <begin position="1"/>
        <end position="209"/>
    </location>
</feature>
<feature type="topological domain" description="Lumenal" evidence="1">
    <location>
        <begin position="1"/>
        <end position="49"/>
    </location>
</feature>
<feature type="transmembrane region" description="Helical" evidence="1">
    <location>
        <begin position="50"/>
        <end position="70"/>
    </location>
</feature>
<feature type="topological domain" description="Cytoplasmic" evidence="1">
    <location>
        <begin position="71"/>
        <end position="184"/>
    </location>
</feature>
<feature type="transmembrane region" description="Helical" evidence="1">
    <location>
        <begin position="185"/>
        <end position="205"/>
    </location>
</feature>
<feature type="topological domain" description="Lumenal" evidence="1">
    <location>
        <begin position="206"/>
        <end position="209"/>
    </location>
</feature>
<feature type="modified residue" description="Phosphoserine" evidence="7">
    <location>
        <position position="121"/>
    </location>
</feature>
<feature type="modified residue" description="Phosphoserine" evidence="7">
    <location>
        <position position="123"/>
    </location>
</feature>
<feature type="modified residue" description="Phosphoserine" evidence="7">
    <location>
        <position position="125"/>
    </location>
</feature>
<feature type="modified residue" description="Phosphothreonine" evidence="7">
    <location>
        <position position="153"/>
    </location>
</feature>
<accession>P46993</accession>
<accession>D6VW18</accession>
<keyword id="KW-0472">Membrane</keyword>
<keyword id="KW-0597">Phosphoprotein</keyword>
<keyword id="KW-1185">Reference proteome</keyword>
<keyword id="KW-0812">Transmembrane</keyword>
<keyword id="KW-1133">Transmembrane helix</keyword>
<proteinExistence type="evidence at protein level"/>
<sequence length="209" mass="24946">MTTLASSIEHKTKHLAAPFENDENPWMKKYCCQCKSCKMSVPVQPWLPRFFVFGILCPVFWLVNLLAWWFLQYWQPHELEFHDLQEDEYPGFYEYEAITKRTVIPIKEEVLQEIRVMQNFSDSNSEEYYESKDGMPSSFLNVNTEQVEDENDTLKKYRYAFLKKVAHDVLESHDLLRKTFRDWNLRSLLGLLIDSILIIFVVLLCKKSR</sequence>
<evidence type="ECO:0000255" key="1"/>
<evidence type="ECO:0000269" key="2">
    <source>
    </source>
</evidence>
<evidence type="ECO:0000269" key="3">
    <source>
    </source>
</evidence>
<evidence type="ECO:0000269" key="4">
    <source>
    </source>
</evidence>
<evidence type="ECO:0000269" key="5">
    <source>
    </source>
</evidence>
<evidence type="ECO:0000305" key="6"/>
<evidence type="ECO:0007744" key="7">
    <source>
    </source>
</evidence>
<gene>
    <name type="primary">ASG7</name>
    <name type="ordered locus">YJL170C</name>
    <name type="ORF">J0514</name>
</gene>
<organism>
    <name type="scientific">Saccharomyces cerevisiae (strain ATCC 204508 / S288c)</name>
    <name type="common">Baker's yeast</name>
    <dbReference type="NCBI Taxonomy" id="559292"/>
    <lineage>
        <taxon>Eukaryota</taxon>
        <taxon>Fungi</taxon>
        <taxon>Dikarya</taxon>
        <taxon>Ascomycota</taxon>
        <taxon>Saccharomycotina</taxon>
        <taxon>Saccharomycetes</taxon>
        <taxon>Saccharomycetales</taxon>
        <taxon>Saccharomycetaceae</taxon>
        <taxon>Saccharomyces</taxon>
    </lineage>
</organism>
<reference key="1">
    <citation type="journal article" date="1996" name="EMBO J.">
        <title>Complete nucleotide sequence of Saccharomyces cerevisiae chromosome X.</title>
        <authorList>
            <person name="Galibert F."/>
            <person name="Alexandraki D."/>
            <person name="Baur A."/>
            <person name="Boles E."/>
            <person name="Chalwatzis N."/>
            <person name="Chuat J.-C."/>
            <person name="Coster F."/>
            <person name="Cziepluch C."/>
            <person name="de Haan M."/>
            <person name="Domdey H."/>
            <person name="Durand P."/>
            <person name="Entian K.-D."/>
            <person name="Gatius M."/>
            <person name="Goffeau A."/>
            <person name="Grivell L.A."/>
            <person name="Hennemann A."/>
            <person name="Herbert C.J."/>
            <person name="Heumann K."/>
            <person name="Hilger F."/>
            <person name="Hollenberg C.P."/>
            <person name="Huang M.-E."/>
            <person name="Jacq C."/>
            <person name="Jauniaux J.-C."/>
            <person name="Katsoulou C."/>
            <person name="Kirchrath L."/>
            <person name="Kleine K."/>
            <person name="Kordes E."/>
            <person name="Koetter P."/>
            <person name="Liebl S."/>
            <person name="Louis E.J."/>
            <person name="Manus V."/>
            <person name="Mewes H.-W."/>
            <person name="Miosga T."/>
            <person name="Obermaier B."/>
            <person name="Perea J."/>
            <person name="Pohl T.M."/>
            <person name="Portetelle D."/>
            <person name="Pujol A."/>
            <person name="Purnelle B."/>
            <person name="Ramezani Rad M."/>
            <person name="Rasmussen S.W."/>
            <person name="Rose M."/>
            <person name="Rossau R."/>
            <person name="Schaaff-Gerstenschlaeger I."/>
            <person name="Smits P.H.M."/>
            <person name="Scarcez T."/>
            <person name="Soriano N."/>
            <person name="To Van D."/>
            <person name="Tzermia M."/>
            <person name="Van Broekhoven A."/>
            <person name="Vandenbol M."/>
            <person name="Wedler H."/>
            <person name="von Wettstein D."/>
            <person name="Wambutt R."/>
            <person name="Zagulski M."/>
            <person name="Zollner A."/>
            <person name="Karpfinger-Hartl L."/>
        </authorList>
    </citation>
    <scope>NUCLEOTIDE SEQUENCE [LARGE SCALE GENOMIC DNA]</scope>
    <source>
        <strain>ATCC 204508 / S288c</strain>
    </source>
</reference>
<reference key="2">
    <citation type="journal article" date="2014" name="G3 (Bethesda)">
        <title>The reference genome sequence of Saccharomyces cerevisiae: Then and now.</title>
        <authorList>
            <person name="Engel S.R."/>
            <person name="Dietrich F.S."/>
            <person name="Fisk D.G."/>
            <person name="Binkley G."/>
            <person name="Balakrishnan R."/>
            <person name="Costanzo M.C."/>
            <person name="Dwight S.S."/>
            <person name="Hitz B.C."/>
            <person name="Karra K."/>
            <person name="Nash R.S."/>
            <person name="Weng S."/>
            <person name="Wong E.D."/>
            <person name="Lloyd P."/>
            <person name="Skrzypek M.S."/>
            <person name="Miyasato S.R."/>
            <person name="Simison M."/>
            <person name="Cherry J.M."/>
        </authorList>
    </citation>
    <scope>GENOME REANNOTATION</scope>
    <source>
        <strain>ATCC 204508 / S288c</strain>
    </source>
</reference>
<reference key="3">
    <citation type="journal article" date="1999" name="Genome Res.">
        <title>Identification of target sites of the alpha2-Mcm1 repressor complex in the yeast genome.</title>
        <authorList>
            <person name="Zhong H."/>
            <person name="McCord R."/>
            <person name="Vershon A.K."/>
        </authorList>
    </citation>
    <scope>INDUCTION</scope>
</reference>
<reference key="4">
    <citation type="journal article" date="2000" name="Mol. Cell. Biol.">
        <title>Asg7p-Ste3p inhibition of pheromone signaling: regulation of the zygotic transition to vegetative growth.</title>
        <authorList>
            <person name="Roth A.F."/>
            <person name="Nelson B."/>
            <person name="Boone C."/>
            <person name="Davis N.G."/>
        </authorList>
    </citation>
    <scope>FUNCTION</scope>
</reference>
<reference key="5">
    <citation type="journal article" date="2000" name="Mol. Cell. Biol.">
        <title>Localization and signaling of G(beta) subunit Ste4p are controlled by a-factor receptor and the a-specific protein Asg7p.</title>
        <authorList>
            <person name="Kim J."/>
            <person name="Bortz E."/>
            <person name="Zhong H."/>
            <person name="Leeuw T."/>
            <person name="Leberer E."/>
            <person name="Vershon A.K."/>
            <person name="Hirsch J.P."/>
        </authorList>
    </citation>
    <scope>FUNCTION</scope>
    <scope>INDUCTION BY PHEROMONE</scope>
    <scope>SUBCELLULAR LOCATION</scope>
</reference>
<reference key="6">
    <citation type="journal article" date="2003" name="Mol. Genet. Genomics">
        <title>Autocrine activation of the pheromone response pathway in matalpha2-cells is attenuated by SST2- and ASG7-dependent mechanisms.</title>
        <authorList>
            <person name="Rivers D.M."/>
            <person name="Sprague G.F. Jr."/>
        </authorList>
    </citation>
    <scope>FUNCTION</scope>
</reference>
<reference key="7">
    <citation type="journal article" date="2003" name="Nature">
        <title>Sequencing and comparison of yeast species to identify genes and regulatory elements.</title>
        <authorList>
            <person name="Kellis M."/>
            <person name="Patterson N."/>
            <person name="Endrizzi M."/>
            <person name="Birren B.W."/>
            <person name="Lander E.S."/>
        </authorList>
    </citation>
    <scope>IDENTIFICATION OF FRAMESHIFT</scope>
</reference>
<reference key="8">
    <citation type="journal article" date="2006" name="Proc. Natl. Acad. Sci. U.S.A.">
        <title>A global topology map of the Saccharomyces cerevisiae membrane proteome.</title>
        <authorList>
            <person name="Kim H."/>
            <person name="Melen K."/>
            <person name="Oesterberg M."/>
            <person name="von Heijne G."/>
        </authorList>
    </citation>
    <scope>TOPOLOGY [LARGE SCALE ANALYSIS]</scope>
    <source>
        <strain>ATCC 208353 / W303-1A</strain>
    </source>
</reference>
<reference key="9">
    <citation type="journal article" date="2007" name="J. Proteome Res.">
        <title>Large-scale phosphorylation analysis of alpha-factor-arrested Saccharomyces cerevisiae.</title>
        <authorList>
            <person name="Li X."/>
            <person name="Gerber S.A."/>
            <person name="Rudner A.D."/>
            <person name="Beausoleil S.A."/>
            <person name="Haas W."/>
            <person name="Villen J."/>
            <person name="Elias J.E."/>
            <person name="Gygi S.P."/>
        </authorList>
    </citation>
    <scope>PHOSPHORYLATION [LARGE SCALE ANALYSIS] AT SER-121; SER-123; SER-125 AND THR-153</scope>
    <scope>IDENTIFICATION BY MASS SPECTROMETRY [LARGE SCALE ANALYSIS]</scope>
    <source>
        <strain>ADR376</strain>
    </source>
</reference>
<comment type="function">
    <text evidence="3 4 5">Required for receptor inhibition of inappropriately expressed a-factor receptor (STE3) in MAT a cells. Inhibits signaling by relocalizing the G protein beta-gamma (STE4-STE18) subunit to intracellular membranes. May also be a mechanism for the down-regulation of the mating pheromone response after the zygotic fusion event, promoting the transition of the new diploid cell to vegetative growth.</text>
</comment>
<comment type="subcellular location">
    <subcellularLocation>
        <location evidence="4">Endomembrane system</location>
        <topology evidence="4">Multi-pass membrane protein</topology>
    </subcellularLocation>
</comment>
<comment type="induction">
    <text evidence="2 4">Induced by alpha-pheromone. Repressed by the ALPHA2-MCM1 repressor.</text>
</comment>
<comment type="sequence caution" evidence="6">
    <conflict type="frameshift">
        <sequence resource="EMBL-CDS" id="CAA89465"/>
    </conflict>
</comment>